<gene>
    <name evidence="7 9" type="primary">Setd3</name>
    <name evidence="9" type="ORF">CG32732</name>
</gene>
<dbReference type="EC" id="2.1.1.85" evidence="1"/>
<dbReference type="EMBL" id="AE014298">
    <property type="protein sequence ID" value="AAF46222.2"/>
    <property type="molecule type" value="Genomic_DNA"/>
</dbReference>
<dbReference type="EMBL" id="BT003482">
    <property type="protein sequence ID" value="AAO39485.1"/>
    <property type="molecule type" value="mRNA"/>
</dbReference>
<dbReference type="RefSeq" id="NP_727144.1">
    <property type="nucleotide sequence ID" value="NM_167100.3"/>
</dbReference>
<dbReference type="SMR" id="Q9W3U1"/>
<dbReference type="FunCoup" id="Q9W3U1">
    <property type="interactions" value="2262"/>
</dbReference>
<dbReference type="IntAct" id="Q9W3U1">
    <property type="interactions" value="3"/>
</dbReference>
<dbReference type="STRING" id="7227.FBpp0070998"/>
<dbReference type="PaxDb" id="7227-FBpp0070998"/>
<dbReference type="DNASU" id="31638"/>
<dbReference type="EnsemblMetazoa" id="FBtr0071039">
    <property type="protein sequence ID" value="FBpp0070998"/>
    <property type="gene ID" value="FBgn0052732"/>
</dbReference>
<dbReference type="GeneID" id="31638"/>
<dbReference type="KEGG" id="dme:Dmel_CG32732"/>
<dbReference type="UCSC" id="CG32732-RA">
    <property type="organism name" value="d. melanogaster"/>
</dbReference>
<dbReference type="AGR" id="FB:FBgn0052732"/>
<dbReference type="CTD" id="84193"/>
<dbReference type="FlyBase" id="FBgn0052732">
    <property type="gene designation" value="Setd3"/>
</dbReference>
<dbReference type="VEuPathDB" id="VectorBase:FBgn0052732"/>
<dbReference type="eggNOG" id="KOG1337">
    <property type="taxonomic scope" value="Eukaryota"/>
</dbReference>
<dbReference type="GeneTree" id="ENSGT00940000153577"/>
<dbReference type="HOGENOM" id="CLU_028272_1_0_1"/>
<dbReference type="InParanoid" id="Q9W3U1"/>
<dbReference type="OMA" id="QHIDGIF"/>
<dbReference type="OrthoDB" id="441812at2759"/>
<dbReference type="PhylomeDB" id="Q9W3U1"/>
<dbReference type="BioGRID-ORCS" id="31638">
    <property type="hits" value="0 hits in 1 CRISPR screen"/>
</dbReference>
<dbReference type="GenomeRNAi" id="31638"/>
<dbReference type="PRO" id="PR:Q9W3U1"/>
<dbReference type="Proteomes" id="UP000000803">
    <property type="component" value="Chromosome X"/>
</dbReference>
<dbReference type="Bgee" id="FBgn0052732">
    <property type="expression patterns" value="Expressed in cleaving embryo and 60 other cell types or tissues"/>
</dbReference>
<dbReference type="GO" id="GO:0005737">
    <property type="term" value="C:cytoplasm"/>
    <property type="evidence" value="ECO:0000314"/>
    <property type="project" value="UniProtKB"/>
</dbReference>
<dbReference type="GO" id="GO:0005634">
    <property type="term" value="C:nucleus"/>
    <property type="evidence" value="ECO:0000314"/>
    <property type="project" value="UniProtKB"/>
</dbReference>
<dbReference type="GO" id="GO:0003779">
    <property type="term" value="F:actin binding"/>
    <property type="evidence" value="ECO:0007669"/>
    <property type="project" value="UniProtKB-KW"/>
</dbReference>
<dbReference type="GO" id="GO:0046975">
    <property type="term" value="F:histone H3K36 methyltransferase activity"/>
    <property type="evidence" value="ECO:0000318"/>
    <property type="project" value="GO_Central"/>
</dbReference>
<dbReference type="GO" id="GO:0042800">
    <property type="term" value="F:histone H3K4 methyltransferase activity"/>
    <property type="evidence" value="ECO:0000318"/>
    <property type="project" value="GO_Central"/>
</dbReference>
<dbReference type="GO" id="GO:0018064">
    <property type="term" value="F:protein-L-histidine N-tele-methyltransferase activity"/>
    <property type="evidence" value="ECO:0000314"/>
    <property type="project" value="UniProtKB"/>
</dbReference>
<dbReference type="GO" id="GO:0003713">
    <property type="term" value="F:transcription coactivator activity"/>
    <property type="evidence" value="ECO:0000318"/>
    <property type="project" value="GO_Central"/>
</dbReference>
<dbReference type="GO" id="GO:0030047">
    <property type="term" value="P:actin modification"/>
    <property type="evidence" value="ECO:0000314"/>
    <property type="project" value="UniProtKB"/>
</dbReference>
<dbReference type="GO" id="GO:0018021">
    <property type="term" value="P:peptidyl-histidine methylation"/>
    <property type="evidence" value="ECO:0000314"/>
    <property type="project" value="UniProtKB"/>
</dbReference>
<dbReference type="GO" id="GO:0045944">
    <property type="term" value="P:positive regulation of transcription by RNA polymerase II"/>
    <property type="evidence" value="ECO:0000318"/>
    <property type="project" value="GO_Central"/>
</dbReference>
<dbReference type="CDD" id="cd19176">
    <property type="entry name" value="SET_SETD3"/>
    <property type="match status" value="1"/>
</dbReference>
<dbReference type="FunFam" id="3.90.1410.10:FF:000026">
    <property type="entry name" value="Actin-histidine N-methyltransferase"/>
    <property type="match status" value="1"/>
</dbReference>
<dbReference type="Gene3D" id="3.90.1420.10">
    <property type="entry name" value="Rubisco LSMT, substrate-binding domain"/>
    <property type="match status" value="1"/>
</dbReference>
<dbReference type="Gene3D" id="3.90.1410.10">
    <property type="entry name" value="set domain protein methyltransferase, domain 1"/>
    <property type="match status" value="1"/>
</dbReference>
<dbReference type="InterPro" id="IPR015353">
    <property type="entry name" value="Rubisco_LSMT_subst-bd"/>
</dbReference>
<dbReference type="InterPro" id="IPR036464">
    <property type="entry name" value="Rubisco_LSMT_subst-bd_sf"/>
</dbReference>
<dbReference type="InterPro" id="IPR001214">
    <property type="entry name" value="SET_dom"/>
</dbReference>
<dbReference type="InterPro" id="IPR046341">
    <property type="entry name" value="SET_dom_sf"/>
</dbReference>
<dbReference type="InterPro" id="IPR025785">
    <property type="entry name" value="SETD3"/>
</dbReference>
<dbReference type="InterPro" id="IPR044428">
    <property type="entry name" value="SETD3_SET"/>
</dbReference>
<dbReference type="InterPro" id="IPR050600">
    <property type="entry name" value="SETD3_SETD6_MTase"/>
</dbReference>
<dbReference type="PANTHER" id="PTHR13271:SF47">
    <property type="entry name" value="ACTIN-HISTIDINE N-METHYLTRANSFERASE"/>
    <property type="match status" value="1"/>
</dbReference>
<dbReference type="PANTHER" id="PTHR13271">
    <property type="entry name" value="UNCHARACTERIZED PUTATIVE METHYLTRANSFERASE"/>
    <property type="match status" value="1"/>
</dbReference>
<dbReference type="Pfam" id="PF09273">
    <property type="entry name" value="Rubis-subs-bind"/>
    <property type="match status" value="1"/>
</dbReference>
<dbReference type="SUPFAM" id="SSF81822">
    <property type="entry name" value="RuBisCo LSMT C-terminal, substrate-binding domain"/>
    <property type="match status" value="1"/>
</dbReference>
<dbReference type="SUPFAM" id="SSF82199">
    <property type="entry name" value="SET domain"/>
    <property type="match status" value="1"/>
</dbReference>
<dbReference type="PROSITE" id="PS51565">
    <property type="entry name" value="SAM_MT85_SETD3"/>
    <property type="match status" value="1"/>
</dbReference>
<dbReference type="PROSITE" id="PS50280">
    <property type="entry name" value="SET"/>
    <property type="match status" value="1"/>
</dbReference>
<evidence type="ECO:0000250" key="1">
    <source>
        <dbReference type="UniProtKB" id="Q86TU7"/>
    </source>
</evidence>
<evidence type="ECO:0000255" key="2">
    <source>
        <dbReference type="PROSITE-ProRule" id="PRU00190"/>
    </source>
</evidence>
<evidence type="ECO:0000255" key="3">
    <source>
        <dbReference type="PROSITE-ProRule" id="PRU00898"/>
    </source>
</evidence>
<evidence type="ECO:0000256" key="4">
    <source>
        <dbReference type="SAM" id="MobiDB-lite"/>
    </source>
</evidence>
<evidence type="ECO:0000269" key="5">
    <source>
    </source>
</evidence>
<evidence type="ECO:0000269" key="6">
    <source>
    </source>
</evidence>
<evidence type="ECO:0000303" key="7">
    <source>
    </source>
</evidence>
<evidence type="ECO:0000305" key="8"/>
<evidence type="ECO:0000312" key="9">
    <source>
        <dbReference type="FlyBase" id="FBgn0052732"/>
    </source>
</evidence>
<comment type="function">
    <text evidence="6">Protein-histidine N-methyltransferase that specifically mediates 3-methylhistidine (tele-methylhistidine) methylation of actin at 'His-74'.</text>
</comment>
<comment type="catalytic activity">
    <reaction evidence="1">
        <text>L-histidyl-[protein] + S-adenosyl-L-methionine = N(tele)-methyl-L-histidyl-[protein] + S-adenosyl-L-homocysteine + H(+)</text>
        <dbReference type="Rhea" id="RHEA:19369"/>
        <dbReference type="Rhea" id="RHEA-COMP:9745"/>
        <dbReference type="Rhea" id="RHEA-COMP:11600"/>
        <dbReference type="ChEBI" id="CHEBI:15378"/>
        <dbReference type="ChEBI" id="CHEBI:16367"/>
        <dbReference type="ChEBI" id="CHEBI:29979"/>
        <dbReference type="ChEBI" id="CHEBI:57856"/>
        <dbReference type="ChEBI" id="CHEBI:59789"/>
        <dbReference type="EC" id="2.1.1.85"/>
    </reaction>
</comment>
<comment type="subcellular location">
    <subcellularLocation>
        <location evidence="6">Cytoplasm</location>
    </subcellularLocation>
    <subcellularLocation>
        <location evidence="6">Nucleus</location>
    </subcellularLocation>
    <text evidence="6">Localizes mainly in the cytoplasm.</text>
</comment>
<comment type="disruption phenotype">
    <text evidence="5 6">No visible phenotype (PubMed:30067821). Cells show complete loss of actin histidine methylation (PubMed:30526847).</text>
</comment>
<comment type="similarity">
    <text evidence="3">Belongs to the class V-like SAM-binding methyltransferase superfamily. SETD3 actin-histidine methyltransferase family.</text>
</comment>
<feature type="chain" id="PRO_0000446384" description="Actin-histidine N-methyltransferase">
    <location>
        <begin position="1"/>
        <end position="537"/>
    </location>
</feature>
<feature type="domain" description="SET" evidence="2">
    <location>
        <begin position="133"/>
        <end position="364"/>
    </location>
</feature>
<feature type="region of interest" description="Disordered" evidence="4">
    <location>
        <begin position="1"/>
        <end position="50"/>
    </location>
</feature>
<feature type="compositionally biased region" description="Basic residues" evidence="4">
    <location>
        <begin position="1"/>
        <end position="12"/>
    </location>
</feature>
<feature type="binding site" evidence="1">
    <location>
        <position position="114"/>
    </location>
    <ligand>
        <name>S-adenosyl-L-methionine</name>
        <dbReference type="ChEBI" id="CHEBI:59789"/>
    </ligand>
</feature>
<feature type="binding site" evidence="1">
    <location>
        <begin position="143"/>
        <end position="145"/>
    </location>
    <ligand>
        <name>S-adenosyl-L-methionine</name>
        <dbReference type="ChEBI" id="CHEBI:59789"/>
    </ligand>
</feature>
<feature type="binding site" evidence="1">
    <location>
        <position position="299"/>
    </location>
    <ligand>
        <name>S-adenosyl-L-methionine</name>
        <dbReference type="ChEBI" id="CHEBI:59789"/>
    </ligand>
</feature>
<feature type="binding site" evidence="1">
    <location>
        <begin position="325"/>
        <end position="329"/>
    </location>
    <ligand>
        <name>S-adenosyl-L-methionine</name>
        <dbReference type="ChEBI" id="CHEBI:59789"/>
    </ligand>
</feature>
<feature type="binding site" evidence="1">
    <location>
        <begin position="375"/>
        <end position="377"/>
    </location>
    <ligand>
        <name>S-adenosyl-L-methionine</name>
        <dbReference type="ChEBI" id="CHEBI:59789"/>
    </ligand>
</feature>
<keyword id="KW-0009">Actin-binding</keyword>
<keyword id="KW-0963">Cytoplasm</keyword>
<keyword id="KW-0489">Methyltransferase</keyword>
<keyword id="KW-0539">Nucleus</keyword>
<keyword id="KW-1185">Reference proteome</keyword>
<keyword id="KW-0949">S-adenosyl-L-methionine</keyword>
<keyword id="KW-0808">Transferase</keyword>
<name>SETD3_DROME</name>
<protein>
    <recommendedName>
        <fullName evidence="8">Actin-histidine N-methyltransferase</fullName>
        <ecNumber evidence="1">2.1.1.85</ecNumber>
    </recommendedName>
    <alternativeName>
        <fullName evidence="8">Protein-L-histidine N-tele-methyltransferase</fullName>
    </alternativeName>
    <alternativeName>
        <fullName evidence="7 9">SET domain-containing protein 3 homolog</fullName>
    </alternativeName>
</protein>
<sequence>MGKNTKRNKKTKQQQQQPQQNGVTASASGTAVEDFEDQQAASSLPSLNGKKRSQLNKLVEELLDLVEKQPANPNEEWKQYGQLQELLKQIMILEEPLSQAVCPQISDSPDDQTRLAKVEAFSAWAKDGGVHSEGLEIAIFPGYQLGLRATRPLAKDELVLSVPRKLILSEENNSDCRLFGKMTQATHLNLAYDLVIEKIRGEFSEWRPYIDVLPAKYNTVLYFTTKQMELLRGTAAAALAMRQCRVIAKQYAFLYKYAHTMTEPSTGNRSHPGERGLFFTQHGLCYKLYRWAVSTVMTRQNLVPSEKQESEDGPKLISALIPYWDMANHRPGKITSFYATVSRQLECTAQEAVNTGEQFFIYYGDRSNTDLLVHNGFVDPNNTKDYVNIRVGLSLTDALAAKRASILDKLNIRHTAELRVLPAPDFISKELLAFVRVFKMSAEQLDHWCSDLDRAGDLLHIDCALETDHETRTWQFLEDRLKLLLAVFNKEMHEADEVKELELKDGQEIELMLFLYRRLERSILAGALQYAQEHRKV</sequence>
<organism>
    <name type="scientific">Drosophila melanogaster</name>
    <name type="common">Fruit fly</name>
    <dbReference type="NCBI Taxonomy" id="7227"/>
    <lineage>
        <taxon>Eukaryota</taxon>
        <taxon>Metazoa</taxon>
        <taxon>Ecdysozoa</taxon>
        <taxon>Arthropoda</taxon>
        <taxon>Hexapoda</taxon>
        <taxon>Insecta</taxon>
        <taxon>Pterygota</taxon>
        <taxon>Neoptera</taxon>
        <taxon>Endopterygota</taxon>
        <taxon>Diptera</taxon>
        <taxon>Brachycera</taxon>
        <taxon>Muscomorpha</taxon>
        <taxon>Ephydroidea</taxon>
        <taxon>Drosophilidae</taxon>
        <taxon>Drosophila</taxon>
        <taxon>Sophophora</taxon>
    </lineage>
</organism>
<accession>Q9W3U1</accession>
<proteinExistence type="evidence at transcript level"/>
<reference key="1">
    <citation type="journal article" date="2000" name="Science">
        <title>The genome sequence of Drosophila melanogaster.</title>
        <authorList>
            <person name="Adams M.D."/>
            <person name="Celniker S.E."/>
            <person name="Holt R.A."/>
            <person name="Evans C.A."/>
            <person name="Gocayne J.D."/>
            <person name="Amanatides P.G."/>
            <person name="Scherer S.E."/>
            <person name="Li P.W."/>
            <person name="Hoskins R.A."/>
            <person name="Galle R.F."/>
            <person name="George R.A."/>
            <person name="Lewis S.E."/>
            <person name="Richards S."/>
            <person name="Ashburner M."/>
            <person name="Henderson S.N."/>
            <person name="Sutton G.G."/>
            <person name="Wortman J.R."/>
            <person name="Yandell M.D."/>
            <person name="Zhang Q."/>
            <person name="Chen L.X."/>
            <person name="Brandon R.C."/>
            <person name="Rogers Y.-H.C."/>
            <person name="Blazej R.G."/>
            <person name="Champe M."/>
            <person name="Pfeiffer B.D."/>
            <person name="Wan K.H."/>
            <person name="Doyle C."/>
            <person name="Baxter E.G."/>
            <person name="Helt G."/>
            <person name="Nelson C.R."/>
            <person name="Miklos G.L.G."/>
            <person name="Abril J.F."/>
            <person name="Agbayani A."/>
            <person name="An H.-J."/>
            <person name="Andrews-Pfannkoch C."/>
            <person name="Baldwin D."/>
            <person name="Ballew R.M."/>
            <person name="Basu A."/>
            <person name="Baxendale J."/>
            <person name="Bayraktaroglu L."/>
            <person name="Beasley E.M."/>
            <person name="Beeson K.Y."/>
            <person name="Benos P.V."/>
            <person name="Berman B.P."/>
            <person name="Bhandari D."/>
            <person name="Bolshakov S."/>
            <person name="Borkova D."/>
            <person name="Botchan M.R."/>
            <person name="Bouck J."/>
            <person name="Brokstein P."/>
            <person name="Brottier P."/>
            <person name="Burtis K.C."/>
            <person name="Busam D.A."/>
            <person name="Butler H."/>
            <person name="Cadieu E."/>
            <person name="Center A."/>
            <person name="Chandra I."/>
            <person name="Cherry J.M."/>
            <person name="Cawley S."/>
            <person name="Dahlke C."/>
            <person name="Davenport L.B."/>
            <person name="Davies P."/>
            <person name="de Pablos B."/>
            <person name="Delcher A."/>
            <person name="Deng Z."/>
            <person name="Mays A.D."/>
            <person name="Dew I."/>
            <person name="Dietz S.M."/>
            <person name="Dodson K."/>
            <person name="Doup L.E."/>
            <person name="Downes M."/>
            <person name="Dugan-Rocha S."/>
            <person name="Dunkov B.C."/>
            <person name="Dunn P."/>
            <person name="Durbin K.J."/>
            <person name="Evangelista C.C."/>
            <person name="Ferraz C."/>
            <person name="Ferriera S."/>
            <person name="Fleischmann W."/>
            <person name="Fosler C."/>
            <person name="Gabrielian A.E."/>
            <person name="Garg N.S."/>
            <person name="Gelbart W.M."/>
            <person name="Glasser K."/>
            <person name="Glodek A."/>
            <person name="Gong F."/>
            <person name="Gorrell J.H."/>
            <person name="Gu Z."/>
            <person name="Guan P."/>
            <person name="Harris M."/>
            <person name="Harris N.L."/>
            <person name="Harvey D.A."/>
            <person name="Heiman T.J."/>
            <person name="Hernandez J.R."/>
            <person name="Houck J."/>
            <person name="Hostin D."/>
            <person name="Houston K.A."/>
            <person name="Howland T.J."/>
            <person name="Wei M.-H."/>
            <person name="Ibegwam C."/>
            <person name="Jalali M."/>
            <person name="Kalush F."/>
            <person name="Karpen G.H."/>
            <person name="Ke Z."/>
            <person name="Kennison J.A."/>
            <person name="Ketchum K.A."/>
            <person name="Kimmel B.E."/>
            <person name="Kodira C.D."/>
            <person name="Kraft C.L."/>
            <person name="Kravitz S."/>
            <person name="Kulp D."/>
            <person name="Lai Z."/>
            <person name="Lasko P."/>
            <person name="Lei Y."/>
            <person name="Levitsky A.A."/>
            <person name="Li J.H."/>
            <person name="Li Z."/>
            <person name="Liang Y."/>
            <person name="Lin X."/>
            <person name="Liu X."/>
            <person name="Mattei B."/>
            <person name="McIntosh T.C."/>
            <person name="McLeod M.P."/>
            <person name="McPherson D."/>
            <person name="Merkulov G."/>
            <person name="Milshina N.V."/>
            <person name="Mobarry C."/>
            <person name="Morris J."/>
            <person name="Moshrefi A."/>
            <person name="Mount S.M."/>
            <person name="Moy M."/>
            <person name="Murphy B."/>
            <person name="Murphy L."/>
            <person name="Muzny D.M."/>
            <person name="Nelson D.L."/>
            <person name="Nelson D.R."/>
            <person name="Nelson K.A."/>
            <person name="Nixon K."/>
            <person name="Nusskern D.R."/>
            <person name="Pacleb J.M."/>
            <person name="Palazzolo M."/>
            <person name="Pittman G.S."/>
            <person name="Pan S."/>
            <person name="Pollard J."/>
            <person name="Puri V."/>
            <person name="Reese M.G."/>
            <person name="Reinert K."/>
            <person name="Remington K."/>
            <person name="Saunders R.D.C."/>
            <person name="Scheeler F."/>
            <person name="Shen H."/>
            <person name="Shue B.C."/>
            <person name="Siden-Kiamos I."/>
            <person name="Simpson M."/>
            <person name="Skupski M.P."/>
            <person name="Smith T.J."/>
            <person name="Spier E."/>
            <person name="Spradling A.C."/>
            <person name="Stapleton M."/>
            <person name="Strong R."/>
            <person name="Sun E."/>
            <person name="Svirskas R."/>
            <person name="Tector C."/>
            <person name="Turner R."/>
            <person name="Venter E."/>
            <person name="Wang A.H."/>
            <person name="Wang X."/>
            <person name="Wang Z.-Y."/>
            <person name="Wassarman D.A."/>
            <person name="Weinstock G.M."/>
            <person name="Weissenbach J."/>
            <person name="Williams S.M."/>
            <person name="Woodage T."/>
            <person name="Worley K.C."/>
            <person name="Wu D."/>
            <person name="Yang S."/>
            <person name="Yao Q.A."/>
            <person name="Ye J."/>
            <person name="Yeh R.-F."/>
            <person name="Zaveri J.S."/>
            <person name="Zhan M."/>
            <person name="Zhang G."/>
            <person name="Zhao Q."/>
            <person name="Zheng L."/>
            <person name="Zheng X.H."/>
            <person name="Zhong F.N."/>
            <person name="Zhong W."/>
            <person name="Zhou X."/>
            <person name="Zhu S.C."/>
            <person name="Zhu X."/>
            <person name="Smith H.O."/>
            <person name="Gibbs R.A."/>
            <person name="Myers E.W."/>
            <person name="Rubin G.M."/>
            <person name="Venter J.C."/>
        </authorList>
    </citation>
    <scope>NUCLEOTIDE SEQUENCE [LARGE SCALE GENOMIC DNA]</scope>
    <source>
        <strain>Berkeley</strain>
    </source>
</reference>
<reference key="2">
    <citation type="journal article" date="2002" name="Genome Biol.">
        <title>Annotation of the Drosophila melanogaster euchromatic genome: a systematic review.</title>
        <authorList>
            <person name="Misra S."/>
            <person name="Crosby M.A."/>
            <person name="Mungall C.J."/>
            <person name="Matthews B.B."/>
            <person name="Campbell K.S."/>
            <person name="Hradecky P."/>
            <person name="Huang Y."/>
            <person name="Kaminker J.S."/>
            <person name="Millburn G.H."/>
            <person name="Prochnik S.E."/>
            <person name="Smith C.D."/>
            <person name="Tupy J.L."/>
            <person name="Whitfield E.J."/>
            <person name="Bayraktaroglu L."/>
            <person name="Berman B.P."/>
            <person name="Bettencourt B.R."/>
            <person name="Celniker S.E."/>
            <person name="de Grey A.D.N.J."/>
            <person name="Drysdale R.A."/>
            <person name="Harris N.L."/>
            <person name="Richter J."/>
            <person name="Russo S."/>
            <person name="Schroeder A.J."/>
            <person name="Shu S.Q."/>
            <person name="Stapleton M."/>
            <person name="Yamada C."/>
            <person name="Ashburner M."/>
            <person name="Gelbart W.M."/>
            <person name="Rubin G.M."/>
            <person name="Lewis S.E."/>
        </authorList>
    </citation>
    <scope>GENOME REANNOTATION</scope>
    <source>
        <strain>Berkeley</strain>
    </source>
</reference>
<reference key="3">
    <citation type="submission" date="2003-02" db="EMBL/GenBank/DDBJ databases">
        <authorList>
            <person name="Stapleton M."/>
            <person name="Brokstein P."/>
            <person name="Hong L."/>
            <person name="Agbayani A."/>
            <person name="Carlson J."/>
            <person name="Champe M."/>
            <person name="Chavez C."/>
            <person name="Dorsett V."/>
            <person name="Dresnek D."/>
            <person name="Farfan D."/>
            <person name="Frise E."/>
            <person name="George R."/>
            <person name="Gonzalez M."/>
            <person name="Guarin H."/>
            <person name="Kronmiller B."/>
            <person name="Li P."/>
            <person name="Liao G."/>
            <person name="Miranda A."/>
            <person name="Mungall C.J."/>
            <person name="Nunoo J."/>
            <person name="Pacleb J."/>
            <person name="Paragas V."/>
            <person name="Park S."/>
            <person name="Patel S."/>
            <person name="Phouanenavong S."/>
            <person name="Wan K."/>
            <person name="Yu C."/>
            <person name="Lewis S.E."/>
            <person name="Rubin G.M."/>
            <person name="Celniker S."/>
        </authorList>
    </citation>
    <scope>NUCLEOTIDE SEQUENCE [LARGE SCALE MRNA]</scope>
    <source>
        <strain>Berkeley</strain>
    </source>
</reference>
<reference key="4">
    <citation type="journal article" date="2018" name="PLoS ONE">
        <title>Phenotypic characterization of SETD3 knockout Drosophila.</title>
        <authorList>
            <person name="Tiebe M."/>
            <person name="Lutz M."/>
            <person name="Levy D."/>
            <person name="Teleman A.A."/>
        </authorList>
    </citation>
    <scope>SUBCELLULAR LOCATION</scope>
    <scope>DISRUPTION PHENOTYPE</scope>
</reference>
<reference key="5">
    <citation type="journal article" date="2018" name="Elife">
        <title>SETD3 protein is the actin-specific histidine N-methyltransferase.</title>
        <authorList>
            <person name="Kwiatkowski S."/>
            <person name="Seliga A.K."/>
            <person name="Vertommen D."/>
            <person name="Terreri M."/>
            <person name="Ishikawa T."/>
            <person name="Grabowska I."/>
            <person name="Tiebe M."/>
            <person name="Teleman A.A."/>
            <person name="Jagielski A.K."/>
            <person name="Veiga-da-Cunha M."/>
            <person name="Drozak J."/>
        </authorList>
    </citation>
    <scope>FUNCTION</scope>
    <scope>DISRUPTION PHENOTYPE</scope>
</reference>